<sequence length="100" mass="11499">MGALTKAEMAERLYEELGLNKREAKELVELFFEEIRQALEHNEQVKLSGFGNFDLRDKRQRPGRNPKTGEEIPITARRVVTFRPGQKLKARVEAYAGTKP</sequence>
<reference key="1">
    <citation type="journal article" date="2008" name="Proc. Natl. Acad. Sci. U.S.A.">
        <title>Nitrogen fixation island and rhizosphere competence traits in the genome of root-associated Pseudomonas stutzeri A1501.</title>
        <authorList>
            <person name="Yan Y."/>
            <person name="Yang J."/>
            <person name="Dou Y."/>
            <person name="Chen M."/>
            <person name="Ping S."/>
            <person name="Peng J."/>
            <person name="Lu W."/>
            <person name="Zhang W."/>
            <person name="Yao Z."/>
            <person name="Li H."/>
            <person name="Liu W."/>
            <person name="He S."/>
            <person name="Geng L."/>
            <person name="Zhang X."/>
            <person name="Yang F."/>
            <person name="Yu H."/>
            <person name="Zhan Y."/>
            <person name="Li D."/>
            <person name="Lin Z."/>
            <person name="Wang Y."/>
            <person name="Elmerich C."/>
            <person name="Lin M."/>
            <person name="Jin Q."/>
        </authorList>
    </citation>
    <scope>NUCLEOTIDE SEQUENCE [LARGE SCALE GENOMIC DNA]</scope>
    <source>
        <strain>A1501</strain>
    </source>
</reference>
<organism>
    <name type="scientific">Stutzerimonas stutzeri (strain A1501)</name>
    <name type="common">Pseudomonas stutzeri</name>
    <dbReference type="NCBI Taxonomy" id="379731"/>
    <lineage>
        <taxon>Bacteria</taxon>
        <taxon>Pseudomonadati</taxon>
        <taxon>Pseudomonadota</taxon>
        <taxon>Gammaproteobacteria</taxon>
        <taxon>Pseudomonadales</taxon>
        <taxon>Pseudomonadaceae</taxon>
        <taxon>Stutzerimonas</taxon>
    </lineage>
</organism>
<feature type="chain" id="PRO_1000060558" description="Integration host factor subunit alpha">
    <location>
        <begin position="1"/>
        <end position="100"/>
    </location>
</feature>
<feature type="region of interest" description="Disordered" evidence="2">
    <location>
        <begin position="53"/>
        <end position="72"/>
    </location>
</feature>
<gene>
    <name evidence="1" type="primary">ihfA</name>
    <name evidence="1" type="synonym">himA</name>
    <name type="ordered locus">PST_2363</name>
</gene>
<evidence type="ECO:0000255" key="1">
    <source>
        <dbReference type="HAMAP-Rule" id="MF_00380"/>
    </source>
</evidence>
<evidence type="ECO:0000256" key="2">
    <source>
        <dbReference type="SAM" id="MobiDB-lite"/>
    </source>
</evidence>
<name>IHFA_STUS1</name>
<accession>A4VM16</accession>
<dbReference type="EMBL" id="CP000304">
    <property type="protein sequence ID" value="ABP80017.1"/>
    <property type="molecule type" value="Genomic_DNA"/>
</dbReference>
<dbReference type="RefSeq" id="WP_011913482.1">
    <property type="nucleotide sequence ID" value="NC_009434.1"/>
</dbReference>
<dbReference type="SMR" id="A4VM16"/>
<dbReference type="GeneID" id="88185279"/>
<dbReference type="KEGG" id="psa:PST_2363"/>
<dbReference type="eggNOG" id="COG0776">
    <property type="taxonomic scope" value="Bacteria"/>
</dbReference>
<dbReference type="HOGENOM" id="CLU_105066_1_3_6"/>
<dbReference type="Proteomes" id="UP000000233">
    <property type="component" value="Chromosome"/>
</dbReference>
<dbReference type="GO" id="GO:0005829">
    <property type="term" value="C:cytosol"/>
    <property type="evidence" value="ECO:0007669"/>
    <property type="project" value="TreeGrafter"/>
</dbReference>
<dbReference type="GO" id="GO:0003677">
    <property type="term" value="F:DNA binding"/>
    <property type="evidence" value="ECO:0007669"/>
    <property type="project" value="UniProtKB-UniRule"/>
</dbReference>
<dbReference type="GO" id="GO:0030527">
    <property type="term" value="F:structural constituent of chromatin"/>
    <property type="evidence" value="ECO:0007669"/>
    <property type="project" value="InterPro"/>
</dbReference>
<dbReference type="GO" id="GO:0006310">
    <property type="term" value="P:DNA recombination"/>
    <property type="evidence" value="ECO:0007669"/>
    <property type="project" value="UniProtKB-UniRule"/>
</dbReference>
<dbReference type="GO" id="GO:0009893">
    <property type="term" value="P:positive regulation of metabolic process"/>
    <property type="evidence" value="ECO:0007669"/>
    <property type="project" value="UniProtKB-ARBA"/>
</dbReference>
<dbReference type="GO" id="GO:0006355">
    <property type="term" value="P:regulation of DNA-templated transcription"/>
    <property type="evidence" value="ECO:0007669"/>
    <property type="project" value="UniProtKB-UniRule"/>
</dbReference>
<dbReference type="GO" id="GO:0006417">
    <property type="term" value="P:regulation of translation"/>
    <property type="evidence" value="ECO:0007669"/>
    <property type="project" value="UniProtKB-UniRule"/>
</dbReference>
<dbReference type="CDD" id="cd13835">
    <property type="entry name" value="IHF_A"/>
    <property type="match status" value="1"/>
</dbReference>
<dbReference type="FunFam" id="4.10.520.10:FF:000002">
    <property type="entry name" value="Integration host factor subunit alpha"/>
    <property type="match status" value="1"/>
</dbReference>
<dbReference type="Gene3D" id="4.10.520.10">
    <property type="entry name" value="IHF-like DNA-binding proteins"/>
    <property type="match status" value="1"/>
</dbReference>
<dbReference type="HAMAP" id="MF_00380">
    <property type="entry name" value="IHF_alpha"/>
    <property type="match status" value="1"/>
</dbReference>
<dbReference type="InterPro" id="IPR000119">
    <property type="entry name" value="Hist_DNA-bd"/>
</dbReference>
<dbReference type="InterPro" id="IPR020816">
    <property type="entry name" value="Histone-like_DNA-bd_CS"/>
</dbReference>
<dbReference type="InterPro" id="IPR010992">
    <property type="entry name" value="IHF-like_DNA-bd_dom_sf"/>
</dbReference>
<dbReference type="InterPro" id="IPR005684">
    <property type="entry name" value="IHF_alpha"/>
</dbReference>
<dbReference type="NCBIfam" id="TIGR00987">
    <property type="entry name" value="himA"/>
    <property type="match status" value="1"/>
</dbReference>
<dbReference type="NCBIfam" id="NF001401">
    <property type="entry name" value="PRK00285.1"/>
    <property type="match status" value="1"/>
</dbReference>
<dbReference type="PANTHER" id="PTHR33175">
    <property type="entry name" value="DNA-BINDING PROTEIN HU"/>
    <property type="match status" value="1"/>
</dbReference>
<dbReference type="PANTHER" id="PTHR33175:SF2">
    <property type="entry name" value="INTEGRATION HOST FACTOR SUBUNIT ALPHA"/>
    <property type="match status" value="1"/>
</dbReference>
<dbReference type="Pfam" id="PF00216">
    <property type="entry name" value="Bac_DNA_binding"/>
    <property type="match status" value="1"/>
</dbReference>
<dbReference type="PRINTS" id="PR01727">
    <property type="entry name" value="DNABINDINGHU"/>
</dbReference>
<dbReference type="SMART" id="SM00411">
    <property type="entry name" value="BHL"/>
    <property type="match status" value="1"/>
</dbReference>
<dbReference type="SUPFAM" id="SSF47729">
    <property type="entry name" value="IHF-like DNA-binding proteins"/>
    <property type="match status" value="1"/>
</dbReference>
<dbReference type="PROSITE" id="PS00045">
    <property type="entry name" value="HISTONE_LIKE"/>
    <property type="match status" value="1"/>
</dbReference>
<proteinExistence type="inferred from homology"/>
<comment type="function">
    <text evidence="1">This protein is one of the two subunits of integration host factor, a specific DNA-binding protein that functions in genetic recombination as well as in transcriptional and translational control.</text>
</comment>
<comment type="subunit">
    <text evidence="1">Heterodimer of an alpha and a beta chain.</text>
</comment>
<comment type="similarity">
    <text evidence="1">Belongs to the bacterial histone-like protein family.</text>
</comment>
<keyword id="KW-0233">DNA recombination</keyword>
<keyword id="KW-0238">DNA-binding</keyword>
<keyword id="KW-1185">Reference proteome</keyword>
<keyword id="KW-0804">Transcription</keyword>
<keyword id="KW-0805">Transcription regulation</keyword>
<keyword id="KW-0810">Translation regulation</keyword>
<protein>
    <recommendedName>
        <fullName evidence="1">Integration host factor subunit alpha</fullName>
        <shortName evidence="1">IHF-alpha</shortName>
    </recommendedName>
</protein>